<dbReference type="EC" id="2.1.1.198" evidence="1"/>
<dbReference type="EMBL" id="AL157959">
    <property type="protein sequence ID" value="CAM07642.1"/>
    <property type="molecule type" value="Genomic_DNA"/>
</dbReference>
<dbReference type="PIR" id="B82030">
    <property type="entry name" value="B82030"/>
</dbReference>
<dbReference type="RefSeq" id="WP_002246526.1">
    <property type="nucleotide sequence ID" value="NC_003116.1"/>
</dbReference>
<dbReference type="SMR" id="Q9JWJ7"/>
<dbReference type="EnsemblBacteria" id="CAM07642">
    <property type="protein sequence ID" value="CAM07642"/>
    <property type="gene ID" value="NMA0342"/>
</dbReference>
<dbReference type="GeneID" id="93387019"/>
<dbReference type="KEGG" id="nma:NMA0342"/>
<dbReference type="HOGENOM" id="CLU_044779_2_0_4"/>
<dbReference type="Proteomes" id="UP000000626">
    <property type="component" value="Chromosome"/>
</dbReference>
<dbReference type="GO" id="GO:0005737">
    <property type="term" value="C:cytoplasm"/>
    <property type="evidence" value="ECO:0007669"/>
    <property type="project" value="UniProtKB-SubCell"/>
</dbReference>
<dbReference type="GO" id="GO:0070677">
    <property type="term" value="F:rRNA (cytosine-2'-O-)-methyltransferase activity"/>
    <property type="evidence" value="ECO:0007669"/>
    <property type="project" value="UniProtKB-UniRule"/>
</dbReference>
<dbReference type="CDD" id="cd11648">
    <property type="entry name" value="RsmI"/>
    <property type="match status" value="1"/>
</dbReference>
<dbReference type="FunFam" id="3.30.950.10:FF:000002">
    <property type="entry name" value="Ribosomal RNA small subunit methyltransferase I"/>
    <property type="match status" value="1"/>
</dbReference>
<dbReference type="FunFam" id="3.40.1010.10:FF:000007">
    <property type="entry name" value="Ribosomal RNA small subunit methyltransferase I"/>
    <property type="match status" value="1"/>
</dbReference>
<dbReference type="Gene3D" id="3.40.1010.10">
    <property type="entry name" value="Cobalt-precorrin-4 Transmethylase, Domain 1"/>
    <property type="match status" value="1"/>
</dbReference>
<dbReference type="Gene3D" id="3.30.950.10">
    <property type="entry name" value="Methyltransferase, Cobalt-precorrin-4 Transmethylase, Domain 2"/>
    <property type="match status" value="1"/>
</dbReference>
<dbReference type="HAMAP" id="MF_01877">
    <property type="entry name" value="16SrRNA_methyltr_I"/>
    <property type="match status" value="1"/>
</dbReference>
<dbReference type="InterPro" id="IPR000878">
    <property type="entry name" value="4pyrrol_Mease"/>
</dbReference>
<dbReference type="InterPro" id="IPR035996">
    <property type="entry name" value="4pyrrol_Methylase_sf"/>
</dbReference>
<dbReference type="InterPro" id="IPR014777">
    <property type="entry name" value="4pyrrole_Mease_sub1"/>
</dbReference>
<dbReference type="InterPro" id="IPR014776">
    <property type="entry name" value="4pyrrole_Mease_sub2"/>
</dbReference>
<dbReference type="InterPro" id="IPR008189">
    <property type="entry name" value="rRNA_ssu_MeTfrase_I"/>
</dbReference>
<dbReference type="InterPro" id="IPR053910">
    <property type="entry name" value="RsmI_HTH"/>
</dbReference>
<dbReference type="InterPro" id="IPR018063">
    <property type="entry name" value="SAM_MeTrfase_RsmI_CS"/>
</dbReference>
<dbReference type="NCBIfam" id="TIGR00096">
    <property type="entry name" value="16S rRNA (cytidine(1402)-2'-O)-methyltransferase"/>
    <property type="match status" value="1"/>
</dbReference>
<dbReference type="PANTHER" id="PTHR46111">
    <property type="entry name" value="RIBOSOMAL RNA SMALL SUBUNIT METHYLTRANSFERASE I"/>
    <property type="match status" value="1"/>
</dbReference>
<dbReference type="PANTHER" id="PTHR46111:SF1">
    <property type="entry name" value="RIBOSOMAL RNA SMALL SUBUNIT METHYLTRANSFERASE I"/>
    <property type="match status" value="1"/>
</dbReference>
<dbReference type="Pfam" id="PF23016">
    <property type="entry name" value="RsmI_C"/>
    <property type="match status" value="1"/>
</dbReference>
<dbReference type="Pfam" id="PF00590">
    <property type="entry name" value="TP_methylase"/>
    <property type="match status" value="1"/>
</dbReference>
<dbReference type="PIRSF" id="PIRSF005917">
    <property type="entry name" value="MTase_YraL"/>
    <property type="match status" value="1"/>
</dbReference>
<dbReference type="SUPFAM" id="SSF53790">
    <property type="entry name" value="Tetrapyrrole methylase"/>
    <property type="match status" value="1"/>
</dbReference>
<dbReference type="PROSITE" id="PS01296">
    <property type="entry name" value="RSMI"/>
    <property type="match status" value="1"/>
</dbReference>
<comment type="function">
    <text evidence="1">Catalyzes the 2'-O-methylation of the ribose of cytidine 1402 (C1402) in 16S rRNA.</text>
</comment>
<comment type="catalytic activity">
    <reaction evidence="1">
        <text>cytidine(1402) in 16S rRNA + S-adenosyl-L-methionine = 2'-O-methylcytidine(1402) in 16S rRNA + S-adenosyl-L-homocysteine + H(+)</text>
        <dbReference type="Rhea" id="RHEA:42924"/>
        <dbReference type="Rhea" id="RHEA-COMP:10285"/>
        <dbReference type="Rhea" id="RHEA-COMP:10286"/>
        <dbReference type="ChEBI" id="CHEBI:15378"/>
        <dbReference type="ChEBI" id="CHEBI:57856"/>
        <dbReference type="ChEBI" id="CHEBI:59789"/>
        <dbReference type="ChEBI" id="CHEBI:74495"/>
        <dbReference type="ChEBI" id="CHEBI:82748"/>
        <dbReference type="EC" id="2.1.1.198"/>
    </reaction>
</comment>
<comment type="subcellular location">
    <subcellularLocation>
        <location evidence="1">Cytoplasm</location>
    </subcellularLocation>
</comment>
<comment type="similarity">
    <text evidence="1">Belongs to the methyltransferase superfamily. RsmI family.</text>
</comment>
<proteinExistence type="inferred from homology"/>
<accession>Q9JWJ7</accession>
<accession>A1IPH3</accession>
<protein>
    <recommendedName>
        <fullName evidence="1">Ribosomal RNA small subunit methyltransferase I</fullName>
        <ecNumber evidence="1">2.1.1.198</ecNumber>
    </recommendedName>
    <alternativeName>
        <fullName evidence="1">16S rRNA 2'-O-ribose C1402 methyltransferase</fullName>
    </alternativeName>
    <alternativeName>
        <fullName evidence="1">rRNA (cytidine-2'-O-)-methyltransferase RsmI</fullName>
    </alternativeName>
</protein>
<organism>
    <name type="scientific">Neisseria meningitidis serogroup A / serotype 4A (strain DSM 15465 / Z2491)</name>
    <dbReference type="NCBI Taxonomy" id="122587"/>
    <lineage>
        <taxon>Bacteria</taxon>
        <taxon>Pseudomonadati</taxon>
        <taxon>Pseudomonadota</taxon>
        <taxon>Betaproteobacteria</taxon>
        <taxon>Neisseriales</taxon>
        <taxon>Neisseriaceae</taxon>
        <taxon>Neisseria</taxon>
    </lineage>
</organism>
<keyword id="KW-0963">Cytoplasm</keyword>
<keyword id="KW-0489">Methyltransferase</keyword>
<keyword id="KW-0698">rRNA processing</keyword>
<keyword id="KW-0949">S-adenosyl-L-methionine</keyword>
<keyword id="KW-0808">Transferase</keyword>
<sequence>MFQKHLQKASDSVVGGTLYVVATPIGNLADITLRALAVLQKADIICAEDTRVTAQLLSAYGIQGKLVSVREHNERQMADKIVGYLSDGMVVAQVSDAGTPAVCDPGAKLARRVREVGFKVVPVVGASAVMAALSVAGVAGSDFYFNGFVPPKSGERRKLFAKWVRVAFPVVMFETPHRIGATLADMAELFPERRLMLAREITKTFETFLSGTVGEIQTALAADGNQSRGEMVLVLYPAQDEKHEGLSESAQNIMKILTAELPTKQAAELAAKITGEGKKALYDLALSWKNK</sequence>
<feature type="chain" id="PRO_0000211948" description="Ribosomal RNA small subunit methyltransferase I">
    <location>
        <begin position="1"/>
        <end position="291"/>
    </location>
</feature>
<evidence type="ECO:0000255" key="1">
    <source>
        <dbReference type="HAMAP-Rule" id="MF_01877"/>
    </source>
</evidence>
<name>RSMI_NEIMA</name>
<gene>
    <name evidence="1" type="primary">rsmI</name>
    <name type="ordered locus">NMA0342</name>
</gene>
<reference key="1">
    <citation type="journal article" date="2000" name="Nature">
        <title>Complete DNA sequence of a serogroup A strain of Neisseria meningitidis Z2491.</title>
        <authorList>
            <person name="Parkhill J."/>
            <person name="Achtman M."/>
            <person name="James K.D."/>
            <person name="Bentley S.D."/>
            <person name="Churcher C.M."/>
            <person name="Klee S.R."/>
            <person name="Morelli G."/>
            <person name="Basham D."/>
            <person name="Brown D."/>
            <person name="Chillingworth T."/>
            <person name="Davies R.M."/>
            <person name="Davis P."/>
            <person name="Devlin K."/>
            <person name="Feltwell T."/>
            <person name="Hamlin N."/>
            <person name="Holroyd S."/>
            <person name="Jagels K."/>
            <person name="Leather S."/>
            <person name="Moule S."/>
            <person name="Mungall K.L."/>
            <person name="Quail M.A."/>
            <person name="Rajandream M.A."/>
            <person name="Rutherford K.M."/>
            <person name="Simmonds M."/>
            <person name="Skelton J."/>
            <person name="Whitehead S."/>
            <person name="Spratt B.G."/>
            <person name="Barrell B.G."/>
        </authorList>
    </citation>
    <scope>NUCLEOTIDE SEQUENCE [LARGE SCALE GENOMIC DNA]</scope>
    <source>
        <strain>DSM 15465 / Z2491</strain>
    </source>
</reference>